<protein>
    <recommendedName>
        <fullName evidence="1">2-dehydro-3-deoxyphosphooctonate aldolase</fullName>
        <ecNumber evidence="1">2.5.1.55</ecNumber>
    </recommendedName>
    <alternativeName>
        <fullName evidence="1">3-deoxy-D-manno-octulosonic acid 8-phosphate synthase</fullName>
    </alternativeName>
    <alternativeName>
        <fullName evidence="1">KDO-8-phosphate synthase</fullName>
        <shortName evidence="1">KDO 8-P synthase</shortName>
        <shortName evidence="1">KDOPS</shortName>
    </alternativeName>
    <alternativeName>
        <fullName evidence="1">Phospho-2-dehydro-3-deoxyoctonate aldolase</fullName>
    </alternativeName>
</protein>
<keyword id="KW-0963">Cytoplasm</keyword>
<keyword id="KW-0448">Lipopolysaccharide biosynthesis</keyword>
<keyword id="KW-0808">Transferase</keyword>
<sequence length="276" mass="30340">MKTSKTKPPKSVLIAGPCVIESLENLRSIAIKLQPLANNERLDFYFKASFDKANRTSLESYRGPGLEKGLEMLQIIKEEFGYKILTDVHESYQASVAAKVADILQIPAFLCRQTDLIVEVSQTNAIINIKKGQFMNPKDMQYSVLKALKTRDSSIQSPTYETALKNGVWLCERGSSFGYGNLVVDMRSLTIMREFAPVIFDATHSVQMPGGANGKSSGDSSFAPILARAAAAVGIDGLFAETHVDPKNALSDGANMLKPDELERLVTDMLKIQNLF</sequence>
<name>KDSA_HELPH</name>
<feature type="chain" id="PRO_0000304456" description="2-dehydro-3-deoxyphosphooctonate aldolase">
    <location>
        <begin position="1"/>
        <end position="276"/>
    </location>
</feature>
<dbReference type="EC" id="2.5.1.55" evidence="1"/>
<dbReference type="EMBL" id="CP000241">
    <property type="protein sequence ID" value="ABF84070.1"/>
    <property type="molecule type" value="Genomic_DNA"/>
</dbReference>
<dbReference type="RefSeq" id="WP_000858127.1">
    <property type="nucleotide sequence ID" value="NC_008086.1"/>
</dbReference>
<dbReference type="SMR" id="Q1CVF2"/>
<dbReference type="KEGG" id="hpa:HPAG1_0003"/>
<dbReference type="HOGENOM" id="CLU_036666_0_0_7"/>
<dbReference type="UniPathway" id="UPA00030"/>
<dbReference type="UniPathway" id="UPA00357">
    <property type="reaction ID" value="UER00474"/>
</dbReference>
<dbReference type="GO" id="GO:0005737">
    <property type="term" value="C:cytoplasm"/>
    <property type="evidence" value="ECO:0007669"/>
    <property type="project" value="UniProtKB-SubCell"/>
</dbReference>
<dbReference type="GO" id="GO:0008676">
    <property type="term" value="F:3-deoxy-8-phosphooctulonate synthase activity"/>
    <property type="evidence" value="ECO:0007669"/>
    <property type="project" value="UniProtKB-UniRule"/>
</dbReference>
<dbReference type="GO" id="GO:0019294">
    <property type="term" value="P:keto-3-deoxy-D-manno-octulosonic acid biosynthetic process"/>
    <property type="evidence" value="ECO:0007669"/>
    <property type="project" value="UniProtKB-UniRule"/>
</dbReference>
<dbReference type="Gene3D" id="3.20.20.70">
    <property type="entry name" value="Aldolase class I"/>
    <property type="match status" value="1"/>
</dbReference>
<dbReference type="HAMAP" id="MF_00056">
    <property type="entry name" value="KDO8P_synth"/>
    <property type="match status" value="1"/>
</dbReference>
<dbReference type="InterPro" id="IPR013785">
    <property type="entry name" value="Aldolase_TIM"/>
</dbReference>
<dbReference type="InterPro" id="IPR006218">
    <property type="entry name" value="DAHP1/KDSA"/>
</dbReference>
<dbReference type="InterPro" id="IPR006269">
    <property type="entry name" value="KDO8P_synthase"/>
</dbReference>
<dbReference type="NCBIfam" id="TIGR01362">
    <property type="entry name" value="KDO8P_synth"/>
    <property type="match status" value="1"/>
</dbReference>
<dbReference type="NCBIfam" id="NF003543">
    <property type="entry name" value="PRK05198.1"/>
    <property type="match status" value="1"/>
</dbReference>
<dbReference type="PANTHER" id="PTHR21057">
    <property type="entry name" value="PHOSPHO-2-DEHYDRO-3-DEOXYHEPTONATE ALDOLASE"/>
    <property type="match status" value="1"/>
</dbReference>
<dbReference type="Pfam" id="PF00793">
    <property type="entry name" value="DAHP_synth_1"/>
    <property type="match status" value="1"/>
</dbReference>
<dbReference type="SUPFAM" id="SSF51569">
    <property type="entry name" value="Aldolase"/>
    <property type="match status" value="1"/>
</dbReference>
<comment type="catalytic activity">
    <reaction evidence="1">
        <text>D-arabinose 5-phosphate + phosphoenolpyruvate + H2O = 3-deoxy-alpha-D-manno-2-octulosonate-8-phosphate + phosphate</text>
        <dbReference type="Rhea" id="RHEA:14053"/>
        <dbReference type="ChEBI" id="CHEBI:15377"/>
        <dbReference type="ChEBI" id="CHEBI:43474"/>
        <dbReference type="ChEBI" id="CHEBI:57693"/>
        <dbReference type="ChEBI" id="CHEBI:58702"/>
        <dbReference type="ChEBI" id="CHEBI:85985"/>
        <dbReference type="EC" id="2.5.1.55"/>
    </reaction>
</comment>
<comment type="pathway">
    <text evidence="1">Carbohydrate biosynthesis; 3-deoxy-D-manno-octulosonate biosynthesis; 3-deoxy-D-manno-octulosonate from D-ribulose 5-phosphate: step 2/3.</text>
</comment>
<comment type="pathway">
    <text evidence="1">Bacterial outer membrane biogenesis; lipopolysaccharide biosynthesis.</text>
</comment>
<comment type="subcellular location">
    <subcellularLocation>
        <location evidence="1">Cytoplasm</location>
    </subcellularLocation>
</comment>
<comment type="similarity">
    <text evidence="1">Belongs to the KdsA family.</text>
</comment>
<evidence type="ECO:0000255" key="1">
    <source>
        <dbReference type="HAMAP-Rule" id="MF_00056"/>
    </source>
</evidence>
<reference key="1">
    <citation type="journal article" date="2006" name="Proc. Natl. Acad. Sci. U.S.A.">
        <title>The complete genome sequence of a chronic atrophic gastritis Helicobacter pylori strain: evolution during disease progression.</title>
        <authorList>
            <person name="Oh J.D."/>
            <person name="Kling-Baeckhed H."/>
            <person name="Giannakis M."/>
            <person name="Xu J."/>
            <person name="Fulton R.S."/>
            <person name="Fulton L.A."/>
            <person name="Cordum H.S."/>
            <person name="Wang C."/>
            <person name="Elliott G."/>
            <person name="Edwards J."/>
            <person name="Mardis E.R."/>
            <person name="Engstrand L.G."/>
            <person name="Gordon J.I."/>
        </authorList>
    </citation>
    <scope>NUCLEOTIDE SEQUENCE [LARGE SCALE GENOMIC DNA]</scope>
    <source>
        <strain>HPAG1</strain>
    </source>
</reference>
<proteinExistence type="inferred from homology"/>
<gene>
    <name evidence="1" type="primary">kdsA</name>
    <name type="ordered locus">HPAG1_0003</name>
</gene>
<organism>
    <name type="scientific">Helicobacter pylori (strain HPAG1)</name>
    <dbReference type="NCBI Taxonomy" id="357544"/>
    <lineage>
        <taxon>Bacteria</taxon>
        <taxon>Pseudomonadati</taxon>
        <taxon>Campylobacterota</taxon>
        <taxon>Epsilonproteobacteria</taxon>
        <taxon>Campylobacterales</taxon>
        <taxon>Helicobacteraceae</taxon>
        <taxon>Helicobacter</taxon>
    </lineage>
</organism>
<accession>Q1CVF2</accession>